<reference key="1">
    <citation type="journal article" date="2005" name="J. Bacteriol.">
        <title>Swine and poultry pathogens: the complete genome sequences of two strains of Mycoplasma hyopneumoniae and a strain of Mycoplasma synoviae.</title>
        <authorList>
            <person name="Vasconcelos A.T.R."/>
            <person name="Ferreira H.B."/>
            <person name="Bizarro C.V."/>
            <person name="Bonatto S.L."/>
            <person name="Carvalho M.O."/>
            <person name="Pinto P.M."/>
            <person name="Almeida D.F."/>
            <person name="Almeida L.G.P."/>
            <person name="Almeida R."/>
            <person name="Alves-Junior L."/>
            <person name="Assuncao E.N."/>
            <person name="Azevedo V.A.C."/>
            <person name="Bogo M.R."/>
            <person name="Brigido M.M."/>
            <person name="Brocchi M."/>
            <person name="Burity H.A."/>
            <person name="Camargo A.A."/>
            <person name="Camargo S.S."/>
            <person name="Carepo M.S."/>
            <person name="Carraro D.M."/>
            <person name="de Mattos Cascardo J.C."/>
            <person name="Castro L.A."/>
            <person name="Cavalcanti G."/>
            <person name="Chemale G."/>
            <person name="Collevatti R.G."/>
            <person name="Cunha C.W."/>
            <person name="Dallagiovanna B."/>
            <person name="Dambros B.P."/>
            <person name="Dellagostin O.A."/>
            <person name="Falcao C."/>
            <person name="Fantinatti-Garboggini F."/>
            <person name="Felipe M.S.S."/>
            <person name="Fiorentin L."/>
            <person name="Franco G.R."/>
            <person name="Freitas N.S.A."/>
            <person name="Frias D."/>
            <person name="Grangeiro T.B."/>
            <person name="Grisard E.C."/>
            <person name="Guimaraes C.T."/>
            <person name="Hungria M."/>
            <person name="Jardim S.N."/>
            <person name="Krieger M.A."/>
            <person name="Laurino J.P."/>
            <person name="Lima L.F.A."/>
            <person name="Lopes M.I."/>
            <person name="Loreto E.L.S."/>
            <person name="Madeira H.M.F."/>
            <person name="Manfio G.P."/>
            <person name="Maranhao A.Q."/>
            <person name="Martinkovics C.T."/>
            <person name="Medeiros S.R.B."/>
            <person name="Moreira M.A.M."/>
            <person name="Neiva M."/>
            <person name="Ramalho-Neto C.E."/>
            <person name="Nicolas M.F."/>
            <person name="Oliveira S.C."/>
            <person name="Paixao R.F.C."/>
            <person name="Pedrosa F.O."/>
            <person name="Pena S.D.J."/>
            <person name="Pereira M."/>
            <person name="Pereira-Ferrari L."/>
            <person name="Piffer I."/>
            <person name="Pinto L.S."/>
            <person name="Potrich D.P."/>
            <person name="Salim A.C.M."/>
            <person name="Santos F.R."/>
            <person name="Schmitt R."/>
            <person name="Schneider M.P.C."/>
            <person name="Schrank A."/>
            <person name="Schrank I.S."/>
            <person name="Schuck A.F."/>
            <person name="Seuanez H.N."/>
            <person name="Silva D.W."/>
            <person name="Silva R."/>
            <person name="Silva S.C."/>
            <person name="Soares C.M.A."/>
            <person name="Souza K.R.L."/>
            <person name="Souza R.C."/>
            <person name="Staats C.C."/>
            <person name="Steffens M.B.R."/>
            <person name="Teixeira S.M.R."/>
            <person name="Urmenyi T.P."/>
            <person name="Vainstein M.H."/>
            <person name="Zuccherato L.W."/>
            <person name="Simpson A.J.G."/>
            <person name="Zaha A."/>
        </authorList>
    </citation>
    <scope>NUCLEOTIDE SEQUENCE [LARGE SCALE GENOMIC DNA]</scope>
    <source>
        <strain>J / ATCC 25934 / NCTC 10110</strain>
    </source>
</reference>
<name>SYY_MESHJ</name>
<organism>
    <name type="scientific">Mesomycoplasma hyopneumoniae (strain J / ATCC 25934 / NCTC 10110)</name>
    <name type="common">Mycoplasma hyopneumoniae</name>
    <dbReference type="NCBI Taxonomy" id="262719"/>
    <lineage>
        <taxon>Bacteria</taxon>
        <taxon>Bacillati</taxon>
        <taxon>Mycoplasmatota</taxon>
        <taxon>Mycoplasmoidales</taxon>
        <taxon>Metamycoplasmataceae</taxon>
        <taxon>Mesomycoplasma</taxon>
    </lineage>
</organism>
<protein>
    <recommendedName>
        <fullName evidence="1">Tyrosine--tRNA ligase</fullName>
        <ecNumber evidence="1">6.1.1.1</ecNumber>
    </recommendedName>
    <alternativeName>
        <fullName evidence="1">Tyrosyl-tRNA synthetase</fullName>
        <shortName evidence="1">TyrRS</shortName>
    </alternativeName>
</protein>
<evidence type="ECO:0000255" key="1">
    <source>
        <dbReference type="HAMAP-Rule" id="MF_02006"/>
    </source>
</evidence>
<comment type="function">
    <text evidence="1">Catalyzes the attachment of tyrosine to tRNA(Tyr) in a two-step reaction: tyrosine is first activated by ATP to form Tyr-AMP and then transferred to the acceptor end of tRNA(Tyr).</text>
</comment>
<comment type="catalytic activity">
    <reaction evidence="1">
        <text>tRNA(Tyr) + L-tyrosine + ATP = L-tyrosyl-tRNA(Tyr) + AMP + diphosphate + H(+)</text>
        <dbReference type="Rhea" id="RHEA:10220"/>
        <dbReference type="Rhea" id="RHEA-COMP:9706"/>
        <dbReference type="Rhea" id="RHEA-COMP:9707"/>
        <dbReference type="ChEBI" id="CHEBI:15378"/>
        <dbReference type="ChEBI" id="CHEBI:30616"/>
        <dbReference type="ChEBI" id="CHEBI:33019"/>
        <dbReference type="ChEBI" id="CHEBI:58315"/>
        <dbReference type="ChEBI" id="CHEBI:78442"/>
        <dbReference type="ChEBI" id="CHEBI:78536"/>
        <dbReference type="ChEBI" id="CHEBI:456215"/>
        <dbReference type="EC" id="6.1.1.1"/>
    </reaction>
</comment>
<comment type="subunit">
    <text evidence="1">Homodimer.</text>
</comment>
<comment type="subcellular location">
    <subcellularLocation>
        <location evidence="1">Cytoplasm</location>
    </subcellularLocation>
</comment>
<comment type="similarity">
    <text evidence="1">Belongs to the class-I aminoacyl-tRNA synthetase family. TyrS type 1 subfamily.</text>
</comment>
<feature type="chain" id="PRO_0000234733" description="Tyrosine--tRNA ligase">
    <location>
        <begin position="1"/>
        <end position="414"/>
    </location>
</feature>
<feature type="domain" description="S4 RNA-binding" evidence="1">
    <location>
        <begin position="349"/>
        <end position="414"/>
    </location>
</feature>
<feature type="short sequence motif" description="'HIGH' region">
    <location>
        <begin position="43"/>
        <end position="52"/>
    </location>
</feature>
<feature type="short sequence motif" description="'KMSKS' region">
    <location>
        <begin position="228"/>
        <end position="232"/>
    </location>
</feature>
<feature type="binding site" evidence="1">
    <location>
        <position position="38"/>
    </location>
    <ligand>
        <name>L-tyrosine</name>
        <dbReference type="ChEBI" id="CHEBI:58315"/>
    </ligand>
</feature>
<feature type="binding site" evidence="1">
    <location>
        <position position="165"/>
    </location>
    <ligand>
        <name>L-tyrosine</name>
        <dbReference type="ChEBI" id="CHEBI:58315"/>
    </ligand>
</feature>
<feature type="binding site" evidence="1">
    <location>
        <position position="169"/>
    </location>
    <ligand>
        <name>L-tyrosine</name>
        <dbReference type="ChEBI" id="CHEBI:58315"/>
    </ligand>
</feature>
<feature type="binding site" evidence="1">
    <location>
        <position position="231"/>
    </location>
    <ligand>
        <name>ATP</name>
        <dbReference type="ChEBI" id="CHEBI:30616"/>
    </ligand>
</feature>
<dbReference type="EC" id="6.1.1.1" evidence="1"/>
<dbReference type="EMBL" id="AE017243">
    <property type="protein sequence ID" value="AAZ44153.1"/>
    <property type="molecule type" value="Genomic_DNA"/>
</dbReference>
<dbReference type="RefSeq" id="WP_011205904.1">
    <property type="nucleotide sequence ID" value="NC_007295.1"/>
</dbReference>
<dbReference type="SMR" id="Q4AAX3"/>
<dbReference type="GeneID" id="41334348"/>
<dbReference type="KEGG" id="mhj:MHJ_0059"/>
<dbReference type="eggNOG" id="COG0162">
    <property type="taxonomic scope" value="Bacteria"/>
</dbReference>
<dbReference type="HOGENOM" id="CLU_024003_0_2_14"/>
<dbReference type="OrthoDB" id="9804243at2"/>
<dbReference type="Proteomes" id="UP000000548">
    <property type="component" value="Chromosome"/>
</dbReference>
<dbReference type="GO" id="GO:0005829">
    <property type="term" value="C:cytosol"/>
    <property type="evidence" value="ECO:0007669"/>
    <property type="project" value="TreeGrafter"/>
</dbReference>
<dbReference type="GO" id="GO:0005524">
    <property type="term" value="F:ATP binding"/>
    <property type="evidence" value="ECO:0007669"/>
    <property type="project" value="UniProtKB-UniRule"/>
</dbReference>
<dbReference type="GO" id="GO:0003723">
    <property type="term" value="F:RNA binding"/>
    <property type="evidence" value="ECO:0007669"/>
    <property type="project" value="UniProtKB-KW"/>
</dbReference>
<dbReference type="GO" id="GO:0004831">
    <property type="term" value="F:tyrosine-tRNA ligase activity"/>
    <property type="evidence" value="ECO:0007669"/>
    <property type="project" value="UniProtKB-UniRule"/>
</dbReference>
<dbReference type="GO" id="GO:0006437">
    <property type="term" value="P:tyrosyl-tRNA aminoacylation"/>
    <property type="evidence" value="ECO:0007669"/>
    <property type="project" value="UniProtKB-UniRule"/>
</dbReference>
<dbReference type="CDD" id="cd00805">
    <property type="entry name" value="TyrRS_core"/>
    <property type="match status" value="1"/>
</dbReference>
<dbReference type="FunFam" id="1.10.240.10:FF:000001">
    <property type="entry name" value="Tyrosine--tRNA ligase"/>
    <property type="match status" value="1"/>
</dbReference>
<dbReference type="Gene3D" id="3.40.50.620">
    <property type="entry name" value="HUPs"/>
    <property type="match status" value="1"/>
</dbReference>
<dbReference type="Gene3D" id="3.10.290.10">
    <property type="entry name" value="RNA-binding S4 domain"/>
    <property type="match status" value="1"/>
</dbReference>
<dbReference type="Gene3D" id="1.10.240.10">
    <property type="entry name" value="Tyrosyl-Transfer RNA Synthetase"/>
    <property type="match status" value="1"/>
</dbReference>
<dbReference type="HAMAP" id="MF_02006">
    <property type="entry name" value="Tyr_tRNA_synth_type1"/>
    <property type="match status" value="1"/>
</dbReference>
<dbReference type="InterPro" id="IPR002305">
    <property type="entry name" value="aa-tRNA-synth_Ic"/>
</dbReference>
<dbReference type="InterPro" id="IPR014729">
    <property type="entry name" value="Rossmann-like_a/b/a_fold"/>
</dbReference>
<dbReference type="InterPro" id="IPR036986">
    <property type="entry name" value="S4_RNA-bd_sf"/>
</dbReference>
<dbReference type="InterPro" id="IPR054608">
    <property type="entry name" value="SYY-like_C"/>
</dbReference>
<dbReference type="InterPro" id="IPR002307">
    <property type="entry name" value="Tyr-tRNA-ligase"/>
</dbReference>
<dbReference type="InterPro" id="IPR024088">
    <property type="entry name" value="Tyr-tRNA-ligase_bac-type"/>
</dbReference>
<dbReference type="InterPro" id="IPR024107">
    <property type="entry name" value="Tyr-tRNA-ligase_bac_1"/>
</dbReference>
<dbReference type="NCBIfam" id="TIGR00234">
    <property type="entry name" value="tyrS"/>
    <property type="match status" value="1"/>
</dbReference>
<dbReference type="PANTHER" id="PTHR11766:SF0">
    <property type="entry name" value="TYROSINE--TRNA LIGASE, MITOCHONDRIAL"/>
    <property type="match status" value="1"/>
</dbReference>
<dbReference type="PANTHER" id="PTHR11766">
    <property type="entry name" value="TYROSYL-TRNA SYNTHETASE"/>
    <property type="match status" value="1"/>
</dbReference>
<dbReference type="Pfam" id="PF22421">
    <property type="entry name" value="SYY_C-terminal"/>
    <property type="match status" value="1"/>
</dbReference>
<dbReference type="Pfam" id="PF00579">
    <property type="entry name" value="tRNA-synt_1b"/>
    <property type="match status" value="1"/>
</dbReference>
<dbReference type="PRINTS" id="PR01040">
    <property type="entry name" value="TRNASYNTHTYR"/>
</dbReference>
<dbReference type="SUPFAM" id="SSF55174">
    <property type="entry name" value="Alpha-L RNA-binding motif"/>
    <property type="match status" value="1"/>
</dbReference>
<dbReference type="SUPFAM" id="SSF52374">
    <property type="entry name" value="Nucleotidylyl transferase"/>
    <property type="match status" value="1"/>
</dbReference>
<accession>Q4AAX3</accession>
<sequence length="414" mass="47822">MSYIEKQEFLTELKTRNILKDISSPEKFFNLKPDQGIYIGFDPTATSLHLGNYISISLLKRLQKIGIKVLAVIGGATGMIGDPSFSSKERKLLDFKTLNANKEKIKKQLESFGLPVFDNFEIYKNMNILDFLRDVGKNINISYLLAKESVASRIEVGLSFTEFSYQLIQGWDFKFLAENYQIIGQAGGSDQWGNMVTGLDFIKKSNLVQKDEAFVFTTNLLTDENGQKFGKSLGKPIWLDPEMYSPFHLYQFLLNQNDEQAEKIMLWLSFLDLKVINELIFKHKNDKKQRILQYNLAQEVVFNIHGDKGLKIAKKITKILFEKLDYTEITFKDKLELKKIIPYFKVSFFNANQIIDLGIFKSKRELNEFISHKALEINGSKISNIGDITEELKDKSNLFLLRKGKKYFFIIELI</sequence>
<gene>
    <name evidence="1" type="primary">tyrS</name>
    <name type="ordered locus">MHJ_0059</name>
</gene>
<keyword id="KW-0030">Aminoacyl-tRNA synthetase</keyword>
<keyword id="KW-0067">ATP-binding</keyword>
<keyword id="KW-0963">Cytoplasm</keyword>
<keyword id="KW-0436">Ligase</keyword>
<keyword id="KW-0547">Nucleotide-binding</keyword>
<keyword id="KW-0648">Protein biosynthesis</keyword>
<keyword id="KW-0694">RNA-binding</keyword>
<proteinExistence type="inferred from homology"/>